<comment type="function">
    <text evidence="1">Single strand-specific metallo-endoribonuclease involved in late-stage 70S ribosome quality control and in maturation of the 3' terminus of the 16S rRNA.</text>
</comment>
<comment type="cofactor">
    <cofactor evidence="1">
        <name>Zn(2+)</name>
        <dbReference type="ChEBI" id="CHEBI:29105"/>
    </cofactor>
    <text evidence="1">Binds 1 zinc ion.</text>
</comment>
<comment type="subcellular location">
    <subcellularLocation>
        <location evidence="1">Cytoplasm</location>
    </subcellularLocation>
</comment>
<comment type="similarity">
    <text evidence="1">Belongs to the endoribonuclease YbeY family.</text>
</comment>
<reference key="1">
    <citation type="journal article" date="2007" name="Genome Res.">
        <title>Genome sequence of a proteolytic (Group I) Clostridium botulinum strain Hall A and comparative analysis of the clostridial genomes.</title>
        <authorList>
            <person name="Sebaihia M."/>
            <person name="Peck M.W."/>
            <person name="Minton N.P."/>
            <person name="Thomson N.R."/>
            <person name="Holden M.T.G."/>
            <person name="Mitchell W.J."/>
            <person name="Carter A.T."/>
            <person name="Bentley S.D."/>
            <person name="Mason D.R."/>
            <person name="Crossman L."/>
            <person name="Paul C.J."/>
            <person name="Ivens A."/>
            <person name="Wells-Bennik M.H.J."/>
            <person name="Davis I.J."/>
            <person name="Cerdeno-Tarraga A.M."/>
            <person name="Churcher C."/>
            <person name="Quail M.A."/>
            <person name="Chillingworth T."/>
            <person name="Feltwell T."/>
            <person name="Fraser A."/>
            <person name="Goodhead I."/>
            <person name="Hance Z."/>
            <person name="Jagels K."/>
            <person name="Larke N."/>
            <person name="Maddison M."/>
            <person name="Moule S."/>
            <person name="Mungall K."/>
            <person name="Norbertczak H."/>
            <person name="Rabbinowitsch E."/>
            <person name="Sanders M."/>
            <person name="Simmonds M."/>
            <person name="White B."/>
            <person name="Whithead S."/>
            <person name="Parkhill J."/>
        </authorList>
    </citation>
    <scope>NUCLEOTIDE SEQUENCE [LARGE SCALE GENOMIC DNA]</scope>
    <source>
        <strain>Hall / ATCC 3502 / NCTC 13319 / Type A</strain>
    </source>
</reference>
<reference key="2">
    <citation type="journal article" date="2007" name="PLoS ONE">
        <title>Analysis of the neurotoxin complex genes in Clostridium botulinum A1-A4 and B1 strains: BoNT/A3, /Ba4 and /B1 clusters are located within plasmids.</title>
        <authorList>
            <person name="Smith T.J."/>
            <person name="Hill K.K."/>
            <person name="Foley B.T."/>
            <person name="Detter J.C."/>
            <person name="Munk A.C."/>
            <person name="Bruce D.C."/>
            <person name="Doggett N.A."/>
            <person name="Smith L.A."/>
            <person name="Marks J.D."/>
            <person name="Xie G."/>
            <person name="Brettin T.S."/>
        </authorList>
    </citation>
    <scope>NUCLEOTIDE SEQUENCE [LARGE SCALE GENOMIC DNA]</scope>
    <source>
        <strain>Hall / ATCC 3502 / NCTC 13319 / Type A</strain>
    </source>
</reference>
<sequence length="166" mass="19749">MIYIDNRQNKIKVNEELENKIKEIIDYALKEEKVNIDYEISVVFIDNNSIKEINKDYRNIDKATDVLSFPMLDYEDGEVFKDIYLNYEFDESDLDEGNLVLGDIALSLEKAEEQSKEFGHSFLRETCYLTIHSVLHLLGYDHMEEDEKVIMRQREEEILKSFNLHR</sequence>
<gene>
    <name evidence="1" type="primary">ybeY</name>
    <name type="ordered locus">CBO2949</name>
    <name type="ordered locus">CLC_2844</name>
</gene>
<organism>
    <name type="scientific">Clostridium botulinum (strain Hall / ATCC 3502 / NCTC 13319 / Type A)</name>
    <dbReference type="NCBI Taxonomy" id="441771"/>
    <lineage>
        <taxon>Bacteria</taxon>
        <taxon>Bacillati</taxon>
        <taxon>Bacillota</taxon>
        <taxon>Clostridia</taxon>
        <taxon>Eubacteriales</taxon>
        <taxon>Clostridiaceae</taxon>
        <taxon>Clostridium</taxon>
    </lineage>
</organism>
<accession>A5I629</accession>
<accession>A7G7B2</accession>
<evidence type="ECO:0000255" key="1">
    <source>
        <dbReference type="HAMAP-Rule" id="MF_00009"/>
    </source>
</evidence>
<proteinExistence type="inferred from homology"/>
<feature type="chain" id="PRO_1000000716" description="Endoribonuclease YbeY">
    <location>
        <begin position="1"/>
        <end position="166"/>
    </location>
</feature>
<feature type="binding site" evidence="1">
    <location>
        <position position="132"/>
    </location>
    <ligand>
        <name>Zn(2+)</name>
        <dbReference type="ChEBI" id="CHEBI:29105"/>
        <note>catalytic</note>
    </ligand>
</feature>
<feature type="binding site" evidence="1">
    <location>
        <position position="136"/>
    </location>
    <ligand>
        <name>Zn(2+)</name>
        <dbReference type="ChEBI" id="CHEBI:29105"/>
        <note>catalytic</note>
    </ligand>
</feature>
<feature type="binding site" evidence="1">
    <location>
        <position position="142"/>
    </location>
    <ligand>
        <name>Zn(2+)</name>
        <dbReference type="ChEBI" id="CHEBI:29105"/>
        <note>catalytic</note>
    </ligand>
</feature>
<dbReference type="EC" id="3.1.-.-" evidence="1"/>
<dbReference type="EMBL" id="CP000727">
    <property type="protein sequence ID" value="ABS37879.1"/>
    <property type="molecule type" value="Genomic_DNA"/>
</dbReference>
<dbReference type="EMBL" id="AM412317">
    <property type="protein sequence ID" value="CAL84511.1"/>
    <property type="molecule type" value="Genomic_DNA"/>
</dbReference>
<dbReference type="RefSeq" id="WP_012047996.1">
    <property type="nucleotide sequence ID" value="NC_009698.1"/>
</dbReference>
<dbReference type="RefSeq" id="YP_001255441.1">
    <property type="nucleotide sequence ID" value="NC_009495.1"/>
</dbReference>
<dbReference type="RefSeq" id="YP_001388677.1">
    <property type="nucleotide sequence ID" value="NC_009698.1"/>
</dbReference>
<dbReference type="SMR" id="A5I629"/>
<dbReference type="GeneID" id="5185649"/>
<dbReference type="KEGG" id="cbh:CLC_2844"/>
<dbReference type="KEGG" id="cbo:CBO2949"/>
<dbReference type="PATRIC" id="fig|413999.7.peg.2927"/>
<dbReference type="HOGENOM" id="CLU_106710_3_0_9"/>
<dbReference type="PRO" id="PR:A5I629"/>
<dbReference type="Proteomes" id="UP000001986">
    <property type="component" value="Chromosome"/>
</dbReference>
<dbReference type="GO" id="GO:0005737">
    <property type="term" value="C:cytoplasm"/>
    <property type="evidence" value="ECO:0007669"/>
    <property type="project" value="UniProtKB-SubCell"/>
</dbReference>
<dbReference type="GO" id="GO:0004222">
    <property type="term" value="F:metalloendopeptidase activity"/>
    <property type="evidence" value="ECO:0007669"/>
    <property type="project" value="InterPro"/>
</dbReference>
<dbReference type="GO" id="GO:0004521">
    <property type="term" value="F:RNA endonuclease activity"/>
    <property type="evidence" value="ECO:0007669"/>
    <property type="project" value="UniProtKB-UniRule"/>
</dbReference>
<dbReference type="GO" id="GO:0008270">
    <property type="term" value="F:zinc ion binding"/>
    <property type="evidence" value="ECO:0007669"/>
    <property type="project" value="UniProtKB-UniRule"/>
</dbReference>
<dbReference type="GO" id="GO:0006364">
    <property type="term" value="P:rRNA processing"/>
    <property type="evidence" value="ECO:0007669"/>
    <property type="project" value="UniProtKB-UniRule"/>
</dbReference>
<dbReference type="Gene3D" id="3.40.390.30">
    <property type="entry name" value="Metalloproteases ('zincins'), catalytic domain"/>
    <property type="match status" value="1"/>
</dbReference>
<dbReference type="HAMAP" id="MF_00009">
    <property type="entry name" value="Endoribonucl_YbeY"/>
    <property type="match status" value="1"/>
</dbReference>
<dbReference type="InterPro" id="IPR023091">
    <property type="entry name" value="MetalPrtase_cat_dom_sf_prd"/>
</dbReference>
<dbReference type="InterPro" id="IPR002036">
    <property type="entry name" value="YbeY"/>
</dbReference>
<dbReference type="InterPro" id="IPR020549">
    <property type="entry name" value="YbeY_CS"/>
</dbReference>
<dbReference type="NCBIfam" id="TIGR00043">
    <property type="entry name" value="rRNA maturation RNase YbeY"/>
    <property type="match status" value="1"/>
</dbReference>
<dbReference type="PANTHER" id="PTHR46986">
    <property type="entry name" value="ENDORIBONUCLEASE YBEY, CHLOROPLASTIC"/>
    <property type="match status" value="1"/>
</dbReference>
<dbReference type="PANTHER" id="PTHR46986:SF1">
    <property type="entry name" value="ENDORIBONUCLEASE YBEY, CHLOROPLASTIC"/>
    <property type="match status" value="1"/>
</dbReference>
<dbReference type="Pfam" id="PF02130">
    <property type="entry name" value="YbeY"/>
    <property type="match status" value="1"/>
</dbReference>
<dbReference type="SUPFAM" id="SSF55486">
    <property type="entry name" value="Metalloproteases ('zincins'), catalytic domain"/>
    <property type="match status" value="1"/>
</dbReference>
<dbReference type="PROSITE" id="PS01306">
    <property type="entry name" value="UPF0054"/>
    <property type="match status" value="1"/>
</dbReference>
<keyword id="KW-0963">Cytoplasm</keyword>
<keyword id="KW-0255">Endonuclease</keyword>
<keyword id="KW-0378">Hydrolase</keyword>
<keyword id="KW-0479">Metal-binding</keyword>
<keyword id="KW-0540">Nuclease</keyword>
<keyword id="KW-1185">Reference proteome</keyword>
<keyword id="KW-0690">Ribosome biogenesis</keyword>
<keyword id="KW-0698">rRNA processing</keyword>
<keyword id="KW-0862">Zinc</keyword>
<protein>
    <recommendedName>
        <fullName evidence="1">Endoribonuclease YbeY</fullName>
        <ecNumber evidence="1">3.1.-.-</ecNumber>
    </recommendedName>
</protein>
<name>YBEY_CLOBH</name>